<organism>
    <name type="scientific">Bacillus anthracis</name>
    <dbReference type="NCBI Taxonomy" id="1392"/>
    <lineage>
        <taxon>Bacteria</taxon>
        <taxon>Bacillati</taxon>
        <taxon>Bacillota</taxon>
        <taxon>Bacilli</taxon>
        <taxon>Bacillales</taxon>
        <taxon>Bacillaceae</taxon>
        <taxon>Bacillus</taxon>
        <taxon>Bacillus cereus group</taxon>
    </lineage>
</organism>
<proteinExistence type="inferred from homology"/>
<comment type="function">
    <text evidence="1">Catalyzes the conversion of 3-deoxy-D-arabino-heptulosonate 7-phosphate (DAHP) to dehydroquinate (DHQ).</text>
</comment>
<comment type="catalytic activity">
    <reaction evidence="1">
        <text>7-phospho-2-dehydro-3-deoxy-D-arabino-heptonate = 3-dehydroquinate + phosphate</text>
        <dbReference type="Rhea" id="RHEA:21968"/>
        <dbReference type="ChEBI" id="CHEBI:32364"/>
        <dbReference type="ChEBI" id="CHEBI:43474"/>
        <dbReference type="ChEBI" id="CHEBI:58394"/>
        <dbReference type="EC" id="4.2.3.4"/>
    </reaction>
</comment>
<comment type="cofactor">
    <cofactor evidence="1">
        <name>NAD(+)</name>
        <dbReference type="ChEBI" id="CHEBI:57540"/>
    </cofactor>
</comment>
<comment type="cofactor">
    <cofactor evidence="1">
        <name>Co(2+)</name>
        <dbReference type="ChEBI" id="CHEBI:48828"/>
    </cofactor>
    <cofactor evidence="1">
        <name>Zn(2+)</name>
        <dbReference type="ChEBI" id="CHEBI:29105"/>
    </cofactor>
    <text evidence="1">Binds 1 divalent metal cation per subunit. Can use either Co(2+) or Zn(2+).</text>
</comment>
<comment type="pathway">
    <text evidence="1">Metabolic intermediate biosynthesis; chorismate biosynthesis; chorismate from D-erythrose 4-phosphate and phosphoenolpyruvate: step 2/7.</text>
</comment>
<comment type="subcellular location">
    <subcellularLocation>
        <location evidence="1">Cytoplasm</location>
    </subcellularLocation>
</comment>
<comment type="similarity">
    <text evidence="1">Belongs to the sugar phosphate cyclases superfamily. Dehydroquinate synthase family.</text>
</comment>
<name>AROB_BACAN</name>
<evidence type="ECO:0000255" key="1">
    <source>
        <dbReference type="HAMAP-Rule" id="MF_00110"/>
    </source>
</evidence>
<accession>Q81SV6</accession>
<accession>Q6I135</accession>
<accession>Q6KUY9</accession>
<keyword id="KW-0028">Amino-acid biosynthesis</keyword>
<keyword id="KW-0057">Aromatic amino acid biosynthesis</keyword>
<keyword id="KW-0170">Cobalt</keyword>
<keyword id="KW-0963">Cytoplasm</keyword>
<keyword id="KW-0456">Lyase</keyword>
<keyword id="KW-0479">Metal-binding</keyword>
<keyword id="KW-0520">NAD</keyword>
<keyword id="KW-0547">Nucleotide-binding</keyword>
<keyword id="KW-1185">Reference proteome</keyword>
<keyword id="KW-0862">Zinc</keyword>
<feature type="chain" id="PRO_0000140707" description="3-dehydroquinate synthase">
    <location>
        <begin position="1"/>
        <end position="363"/>
    </location>
</feature>
<feature type="binding site" evidence="1">
    <location>
        <begin position="72"/>
        <end position="77"/>
    </location>
    <ligand>
        <name>NAD(+)</name>
        <dbReference type="ChEBI" id="CHEBI:57540"/>
    </ligand>
</feature>
<feature type="binding site" evidence="1">
    <location>
        <begin position="130"/>
        <end position="131"/>
    </location>
    <ligand>
        <name>NAD(+)</name>
        <dbReference type="ChEBI" id="CHEBI:57540"/>
    </ligand>
</feature>
<feature type="binding site" evidence="1">
    <location>
        <position position="142"/>
    </location>
    <ligand>
        <name>NAD(+)</name>
        <dbReference type="ChEBI" id="CHEBI:57540"/>
    </ligand>
</feature>
<feature type="binding site" evidence="1">
    <location>
        <position position="151"/>
    </location>
    <ligand>
        <name>NAD(+)</name>
        <dbReference type="ChEBI" id="CHEBI:57540"/>
    </ligand>
</feature>
<feature type="binding site" evidence="1">
    <location>
        <position position="184"/>
    </location>
    <ligand>
        <name>Zn(2+)</name>
        <dbReference type="ChEBI" id="CHEBI:29105"/>
    </ligand>
</feature>
<feature type="binding site" evidence="1">
    <location>
        <position position="247"/>
    </location>
    <ligand>
        <name>Zn(2+)</name>
        <dbReference type="ChEBI" id="CHEBI:29105"/>
    </ligand>
</feature>
<feature type="binding site" evidence="1">
    <location>
        <position position="264"/>
    </location>
    <ligand>
        <name>Zn(2+)</name>
        <dbReference type="ChEBI" id="CHEBI:29105"/>
    </ligand>
</feature>
<dbReference type="EC" id="4.2.3.4" evidence="1"/>
<dbReference type="EMBL" id="AE016879">
    <property type="protein sequence ID" value="AAP25475.1"/>
    <property type="molecule type" value="Genomic_DNA"/>
</dbReference>
<dbReference type="EMBL" id="AE017334">
    <property type="protein sequence ID" value="AAT30636.1"/>
    <property type="molecule type" value="Genomic_DNA"/>
</dbReference>
<dbReference type="EMBL" id="AE017225">
    <property type="protein sequence ID" value="AAT53747.1"/>
    <property type="molecule type" value="Genomic_DNA"/>
</dbReference>
<dbReference type="RefSeq" id="NP_843989.1">
    <property type="nucleotide sequence ID" value="NC_003997.3"/>
</dbReference>
<dbReference type="RefSeq" id="WP_000526831.1">
    <property type="nucleotide sequence ID" value="NZ_WXXJ01000001.1"/>
</dbReference>
<dbReference type="RefSeq" id="YP_027696.1">
    <property type="nucleotide sequence ID" value="NC_005945.1"/>
</dbReference>
<dbReference type="SMR" id="Q81SV6"/>
<dbReference type="STRING" id="261594.GBAA_1538"/>
<dbReference type="DNASU" id="1087138"/>
<dbReference type="GeneID" id="45021512"/>
<dbReference type="KEGG" id="ban:BA_1538"/>
<dbReference type="KEGG" id="banh:HYU01_07795"/>
<dbReference type="KEGG" id="bar:GBAA_1538"/>
<dbReference type="KEGG" id="bat:BAS1427"/>
<dbReference type="PATRIC" id="fig|198094.11.peg.1510"/>
<dbReference type="eggNOG" id="COG0337">
    <property type="taxonomic scope" value="Bacteria"/>
</dbReference>
<dbReference type="HOGENOM" id="CLU_001201_0_2_9"/>
<dbReference type="OMA" id="IAIGMRM"/>
<dbReference type="OrthoDB" id="9806583at2"/>
<dbReference type="UniPathway" id="UPA00053">
    <property type="reaction ID" value="UER00085"/>
</dbReference>
<dbReference type="Proteomes" id="UP000000427">
    <property type="component" value="Chromosome"/>
</dbReference>
<dbReference type="Proteomes" id="UP000000594">
    <property type="component" value="Chromosome"/>
</dbReference>
<dbReference type="GO" id="GO:0005737">
    <property type="term" value="C:cytoplasm"/>
    <property type="evidence" value="ECO:0007669"/>
    <property type="project" value="UniProtKB-SubCell"/>
</dbReference>
<dbReference type="GO" id="GO:0003856">
    <property type="term" value="F:3-dehydroquinate synthase activity"/>
    <property type="evidence" value="ECO:0007669"/>
    <property type="project" value="UniProtKB-UniRule"/>
</dbReference>
<dbReference type="GO" id="GO:0046872">
    <property type="term" value="F:metal ion binding"/>
    <property type="evidence" value="ECO:0007669"/>
    <property type="project" value="UniProtKB-KW"/>
</dbReference>
<dbReference type="GO" id="GO:0000166">
    <property type="term" value="F:nucleotide binding"/>
    <property type="evidence" value="ECO:0007669"/>
    <property type="project" value="UniProtKB-KW"/>
</dbReference>
<dbReference type="GO" id="GO:0008652">
    <property type="term" value="P:amino acid biosynthetic process"/>
    <property type="evidence" value="ECO:0007669"/>
    <property type="project" value="UniProtKB-KW"/>
</dbReference>
<dbReference type="GO" id="GO:0009073">
    <property type="term" value="P:aromatic amino acid family biosynthetic process"/>
    <property type="evidence" value="ECO:0007669"/>
    <property type="project" value="UniProtKB-KW"/>
</dbReference>
<dbReference type="GO" id="GO:0009423">
    <property type="term" value="P:chorismate biosynthetic process"/>
    <property type="evidence" value="ECO:0007669"/>
    <property type="project" value="UniProtKB-UniRule"/>
</dbReference>
<dbReference type="CDD" id="cd08195">
    <property type="entry name" value="DHQS"/>
    <property type="match status" value="1"/>
</dbReference>
<dbReference type="FunFam" id="1.20.1090.10:FF:000008">
    <property type="entry name" value="3-dehydroquinate synthase"/>
    <property type="match status" value="1"/>
</dbReference>
<dbReference type="FunFam" id="3.40.50.1970:FF:000001">
    <property type="entry name" value="3-dehydroquinate synthase"/>
    <property type="match status" value="1"/>
</dbReference>
<dbReference type="Gene3D" id="3.40.50.1970">
    <property type="match status" value="1"/>
</dbReference>
<dbReference type="Gene3D" id="1.20.1090.10">
    <property type="entry name" value="Dehydroquinate synthase-like - alpha domain"/>
    <property type="match status" value="1"/>
</dbReference>
<dbReference type="HAMAP" id="MF_00110">
    <property type="entry name" value="DHQ_synthase"/>
    <property type="match status" value="1"/>
</dbReference>
<dbReference type="InterPro" id="IPR050071">
    <property type="entry name" value="Dehydroquinate_synthase"/>
</dbReference>
<dbReference type="InterPro" id="IPR016037">
    <property type="entry name" value="DHQ_synth_AroB"/>
</dbReference>
<dbReference type="InterPro" id="IPR030963">
    <property type="entry name" value="DHQ_synth_fam"/>
</dbReference>
<dbReference type="InterPro" id="IPR030960">
    <property type="entry name" value="DHQS/DOIS_N"/>
</dbReference>
<dbReference type="InterPro" id="IPR056179">
    <property type="entry name" value="DHQS_C"/>
</dbReference>
<dbReference type="NCBIfam" id="TIGR01357">
    <property type="entry name" value="aroB"/>
    <property type="match status" value="1"/>
</dbReference>
<dbReference type="PANTHER" id="PTHR43622">
    <property type="entry name" value="3-DEHYDROQUINATE SYNTHASE"/>
    <property type="match status" value="1"/>
</dbReference>
<dbReference type="PANTHER" id="PTHR43622:SF7">
    <property type="entry name" value="3-DEHYDROQUINATE SYNTHASE, CHLOROPLASTIC"/>
    <property type="match status" value="1"/>
</dbReference>
<dbReference type="Pfam" id="PF01761">
    <property type="entry name" value="DHQ_synthase"/>
    <property type="match status" value="1"/>
</dbReference>
<dbReference type="Pfam" id="PF24621">
    <property type="entry name" value="DHQS_C"/>
    <property type="match status" value="1"/>
</dbReference>
<dbReference type="PIRSF" id="PIRSF001455">
    <property type="entry name" value="DHQ_synth"/>
    <property type="match status" value="1"/>
</dbReference>
<dbReference type="SUPFAM" id="SSF56796">
    <property type="entry name" value="Dehydroquinate synthase-like"/>
    <property type="match status" value="1"/>
</dbReference>
<sequence>MGNIHIQTKSKEYDVYVGKESLSHLTTIVQNMQPSVSNIMIISDEAVASLHLQTVVDALQIDQKVFSFVVPSGEKEKSFENFYAAHTSALENKLDRNSLIIALGGGMIGDLAGFVAASFMRGIRFVQVPTTLLAHDSAVGGKVAINHPLGKNMIGAFHQPEAVVYHTPFLQSLPEKEWRSGYAEVIKHALIGDVKLYHWLKEEVQTLADLRDEKLIHILMKAIPVKANIVAQDETEKGVRAHLNFGHTLGHALEKELGYGNITHGDGVAVGMLFAIFLSEQVYKVNLAYEEMKQWFLNYGYPKMPSDLSVERLVGLMKQDKKANAGTIHMVLMQEYGVVNVVSIPDETVHIALEAFQKDMVEK</sequence>
<protein>
    <recommendedName>
        <fullName evidence="1">3-dehydroquinate synthase</fullName>
        <shortName evidence="1">DHQS</shortName>
        <ecNumber evidence="1">4.2.3.4</ecNumber>
    </recommendedName>
</protein>
<reference key="1">
    <citation type="journal article" date="2003" name="Nature">
        <title>The genome sequence of Bacillus anthracis Ames and comparison to closely related bacteria.</title>
        <authorList>
            <person name="Read T.D."/>
            <person name="Peterson S.N."/>
            <person name="Tourasse N.J."/>
            <person name="Baillie L.W."/>
            <person name="Paulsen I.T."/>
            <person name="Nelson K.E."/>
            <person name="Tettelin H."/>
            <person name="Fouts D.E."/>
            <person name="Eisen J.A."/>
            <person name="Gill S.R."/>
            <person name="Holtzapple E.K."/>
            <person name="Okstad O.A."/>
            <person name="Helgason E."/>
            <person name="Rilstone J."/>
            <person name="Wu M."/>
            <person name="Kolonay J.F."/>
            <person name="Beanan M.J."/>
            <person name="Dodson R.J."/>
            <person name="Brinkac L.M."/>
            <person name="Gwinn M.L."/>
            <person name="DeBoy R.T."/>
            <person name="Madpu R."/>
            <person name="Daugherty S.C."/>
            <person name="Durkin A.S."/>
            <person name="Haft D.H."/>
            <person name="Nelson W.C."/>
            <person name="Peterson J.D."/>
            <person name="Pop M."/>
            <person name="Khouri H.M."/>
            <person name="Radune D."/>
            <person name="Benton J.L."/>
            <person name="Mahamoud Y."/>
            <person name="Jiang L."/>
            <person name="Hance I.R."/>
            <person name="Weidman J.F."/>
            <person name="Berry K.J."/>
            <person name="Plaut R.D."/>
            <person name="Wolf A.M."/>
            <person name="Watkins K.L."/>
            <person name="Nierman W.C."/>
            <person name="Hazen A."/>
            <person name="Cline R.T."/>
            <person name="Redmond C."/>
            <person name="Thwaite J.E."/>
            <person name="White O."/>
            <person name="Salzberg S.L."/>
            <person name="Thomason B."/>
            <person name="Friedlander A.M."/>
            <person name="Koehler T.M."/>
            <person name="Hanna P.C."/>
            <person name="Kolstoe A.-B."/>
            <person name="Fraser C.M."/>
        </authorList>
    </citation>
    <scope>NUCLEOTIDE SEQUENCE [LARGE SCALE GENOMIC DNA]</scope>
    <source>
        <strain>Ames / isolate Porton</strain>
    </source>
</reference>
<reference key="2">
    <citation type="journal article" date="2009" name="J. Bacteriol.">
        <title>The complete genome sequence of Bacillus anthracis Ames 'Ancestor'.</title>
        <authorList>
            <person name="Ravel J."/>
            <person name="Jiang L."/>
            <person name="Stanley S.T."/>
            <person name="Wilson M.R."/>
            <person name="Decker R.S."/>
            <person name="Read T.D."/>
            <person name="Worsham P."/>
            <person name="Keim P.S."/>
            <person name="Salzberg S.L."/>
            <person name="Fraser-Liggett C.M."/>
            <person name="Rasko D.A."/>
        </authorList>
    </citation>
    <scope>NUCLEOTIDE SEQUENCE [LARGE SCALE GENOMIC DNA]</scope>
    <source>
        <strain>Ames ancestor</strain>
    </source>
</reference>
<reference key="3">
    <citation type="submission" date="2004-01" db="EMBL/GenBank/DDBJ databases">
        <title>Complete genome sequence of Bacillus anthracis Sterne.</title>
        <authorList>
            <person name="Brettin T.S."/>
            <person name="Bruce D."/>
            <person name="Challacombe J.F."/>
            <person name="Gilna P."/>
            <person name="Han C."/>
            <person name="Hill K."/>
            <person name="Hitchcock P."/>
            <person name="Jackson P."/>
            <person name="Keim P."/>
            <person name="Longmire J."/>
            <person name="Lucas S."/>
            <person name="Okinaka R."/>
            <person name="Richardson P."/>
            <person name="Rubin E."/>
            <person name="Tice H."/>
        </authorList>
    </citation>
    <scope>NUCLEOTIDE SEQUENCE [LARGE SCALE GENOMIC DNA]</scope>
    <source>
        <strain>Sterne</strain>
    </source>
</reference>
<gene>
    <name evidence="1" type="primary">aroB</name>
    <name type="ordered locus">BA_1538</name>
    <name type="ordered locus">GBAA_1538</name>
    <name type="ordered locus">BAS1427</name>
</gene>